<reference key="1">
    <citation type="journal article" date="2003" name="Eur. J. Biochem.">
        <title>Accessory proteins functioning selectively and pleiotropically in the biosynthesis of [NiFe] hydrogenases in Thiocapsa roseopersicina.</title>
        <authorList>
            <person name="Maroti G."/>
            <person name="Fodor B.D."/>
            <person name="Rakhely G."/>
            <person name="Kovacs A.T."/>
            <person name="Arvani S."/>
            <person name="Kovacs K.L."/>
        </authorList>
    </citation>
    <scope>NUCLEOTIDE SEQUENCE [GENOMIC DNA]</scope>
    <source>
        <strain>BBS</strain>
    </source>
</reference>
<dbReference type="EC" id="2.7.11.33" evidence="1"/>
<dbReference type="EC" id="2.7.4.28" evidence="1"/>
<dbReference type="EMBL" id="AY152823">
    <property type="protein sequence ID" value="AAN87045.1"/>
    <property type="molecule type" value="Genomic_DNA"/>
</dbReference>
<dbReference type="SMR" id="Q83WU4"/>
<dbReference type="STRING" id="1058.SAMN05421783_11052"/>
<dbReference type="GO" id="GO:0043531">
    <property type="term" value="F:ADP binding"/>
    <property type="evidence" value="ECO:0007669"/>
    <property type="project" value="UniProtKB-UniRule"/>
</dbReference>
<dbReference type="GO" id="GO:0005524">
    <property type="term" value="F:ATP binding"/>
    <property type="evidence" value="ECO:0007669"/>
    <property type="project" value="InterPro"/>
</dbReference>
<dbReference type="GO" id="GO:0016776">
    <property type="term" value="F:phosphotransferase activity, phosphate group as acceptor"/>
    <property type="evidence" value="ECO:0007669"/>
    <property type="project" value="UniProtKB-UniRule"/>
</dbReference>
<dbReference type="GO" id="GO:0004674">
    <property type="term" value="F:protein serine/threonine kinase activity"/>
    <property type="evidence" value="ECO:0007669"/>
    <property type="project" value="UniProtKB-UniRule"/>
</dbReference>
<dbReference type="HAMAP" id="MF_01062">
    <property type="entry name" value="PSRP"/>
    <property type="match status" value="1"/>
</dbReference>
<dbReference type="InterPro" id="IPR005177">
    <property type="entry name" value="Kinase-pyrophosphorylase"/>
</dbReference>
<dbReference type="InterPro" id="IPR026530">
    <property type="entry name" value="PSRP"/>
</dbReference>
<dbReference type="NCBIfam" id="NF003742">
    <property type="entry name" value="PRK05339.1"/>
    <property type="match status" value="1"/>
</dbReference>
<dbReference type="PANTHER" id="PTHR31756">
    <property type="entry name" value="PYRUVATE, PHOSPHATE DIKINASE REGULATORY PROTEIN 1, CHLOROPLASTIC"/>
    <property type="match status" value="1"/>
</dbReference>
<dbReference type="PANTHER" id="PTHR31756:SF3">
    <property type="entry name" value="PYRUVATE, PHOSPHATE DIKINASE REGULATORY PROTEIN 1, CHLOROPLASTIC"/>
    <property type="match status" value="1"/>
</dbReference>
<dbReference type="Pfam" id="PF03618">
    <property type="entry name" value="Kinase-PPPase"/>
    <property type="match status" value="1"/>
</dbReference>
<protein>
    <recommendedName>
        <fullName evidence="1">Putative phosphoenolpyruvate synthase regulatory protein</fullName>
        <shortName evidence="1">PEP synthase regulatory protein</shortName>
        <shortName evidence="1">PSRP</shortName>
        <ecNumber evidence="1">2.7.11.33</ecNumber>
        <ecNumber evidence="1">2.7.4.28</ecNumber>
    </recommendedName>
    <alternativeName>
        <fullName evidence="1">Pyruvate, water dikinase regulatory protein</fullName>
    </alternativeName>
</protein>
<accession>Q83WU4</accession>
<comment type="function">
    <text evidence="1">Bifunctional serine/threonine kinase and phosphorylase involved in the regulation of the phosphoenolpyruvate synthase (PEPS) by catalyzing its phosphorylation/dephosphorylation.</text>
</comment>
<comment type="catalytic activity">
    <reaction evidence="1">
        <text>[pyruvate, water dikinase] + ADP = [pyruvate, water dikinase]-phosphate + AMP + H(+)</text>
        <dbReference type="Rhea" id="RHEA:46020"/>
        <dbReference type="Rhea" id="RHEA-COMP:11425"/>
        <dbReference type="Rhea" id="RHEA-COMP:11426"/>
        <dbReference type="ChEBI" id="CHEBI:15378"/>
        <dbReference type="ChEBI" id="CHEBI:43176"/>
        <dbReference type="ChEBI" id="CHEBI:68546"/>
        <dbReference type="ChEBI" id="CHEBI:456215"/>
        <dbReference type="ChEBI" id="CHEBI:456216"/>
        <dbReference type="EC" id="2.7.11.33"/>
    </reaction>
</comment>
<comment type="catalytic activity">
    <reaction evidence="1">
        <text>[pyruvate, water dikinase]-phosphate + phosphate + H(+) = [pyruvate, water dikinase] + diphosphate</text>
        <dbReference type="Rhea" id="RHEA:48580"/>
        <dbReference type="Rhea" id="RHEA-COMP:11425"/>
        <dbReference type="Rhea" id="RHEA-COMP:11426"/>
        <dbReference type="ChEBI" id="CHEBI:15378"/>
        <dbReference type="ChEBI" id="CHEBI:33019"/>
        <dbReference type="ChEBI" id="CHEBI:43176"/>
        <dbReference type="ChEBI" id="CHEBI:43474"/>
        <dbReference type="ChEBI" id="CHEBI:68546"/>
        <dbReference type="EC" id="2.7.4.28"/>
    </reaction>
</comment>
<comment type="similarity">
    <text evidence="1">Belongs to the pyruvate, phosphate/water dikinase regulatory protein family. PSRP subfamily.</text>
</comment>
<name>PSRP_THIRO</name>
<evidence type="ECO:0000255" key="1">
    <source>
        <dbReference type="HAMAP-Rule" id="MF_01062"/>
    </source>
</evidence>
<sequence length="271" mass="30810">MNRTVFFVSESTGITAETLGHSLLSQFDTIDFEQVYMPYINTDLRAKALTQRMQEAADRDGVRPIVFATMLNNEIREILESGNCYYVELFEGFVEPLSRELGVPPSRKSGRSHAITKPSYYTKRIEAINFAMANDDGIRPDNFHRADVVLIGVSRSGKTPTCLYLAMHYGLRSANYPVTEEDFERGDVPQLVWDCRHKLFALTIDPQRLQLIREERRPGSSYASLARCQDDIRMAAQIYKRLQIPVLNTTSQSIEEISSHIIKALRGSGEH</sequence>
<proteinExistence type="inferred from homology"/>
<feature type="chain" id="PRO_0000196735" description="Putative phosphoenolpyruvate synthase regulatory protein">
    <location>
        <begin position="1"/>
        <end position="271"/>
    </location>
</feature>
<feature type="binding site" evidence="1">
    <location>
        <begin position="152"/>
        <end position="159"/>
    </location>
    <ligand>
        <name>ADP</name>
        <dbReference type="ChEBI" id="CHEBI:456216"/>
    </ligand>
</feature>
<organism>
    <name type="scientific">Thiocapsa roseopersicina</name>
    <dbReference type="NCBI Taxonomy" id="1058"/>
    <lineage>
        <taxon>Bacteria</taxon>
        <taxon>Pseudomonadati</taxon>
        <taxon>Pseudomonadota</taxon>
        <taxon>Gammaproteobacteria</taxon>
        <taxon>Chromatiales</taxon>
        <taxon>Chromatiaceae</taxon>
        <taxon>Thiocapsa</taxon>
    </lineage>
</organism>
<keyword id="KW-0418">Kinase</keyword>
<keyword id="KW-0547">Nucleotide-binding</keyword>
<keyword id="KW-0723">Serine/threonine-protein kinase</keyword>
<keyword id="KW-0808">Transferase</keyword>